<accession>Q311X7</accession>
<sequence>MEKQNKVIIVDYGSQVTQLIARRIREAGVYSEIHPCIVTAAEVAAMSPSAVVLSGGPASVLGEDSPALDKGLLELGVPVLGICYGMQLLAHNLGGELSCSETREYGPADLKFCAGSPLWDGLKTDESSRVWMSHGDRVKKVPAGFTVTGSTETLEVAAMADDQRRIYAVQFHPEVHHSEDGVRMLHNFLFKIAGIKADWSMSSFCERVIKEVSEQVGPDDQVVCALSGGIDSTVVAVLLHKAIGHRLHCIFVDNGVLRLNEVDEVSGYLREHFDLNLTVVDARERFMKQFAGVEDPEKKRKIIGYTFIDVFDEESQKIPNVKYLAQGTLYPDVIESISHKGPSAVIKSHHNVGGLPETMKLKLIEPLRELFKDEVRKLAVELGLPDFIVWRHPFPGPGLAIRVIGEVTEERLDILRKADKIVQNELTASGWYRKVWQGFAVLLPLKTVGVMGDDRTYEHVIALRVVDSVDAMTADWVRLPSEVLERISSRIINEVKGVNRVVYDISSKPPSTIEWE</sequence>
<evidence type="ECO:0000255" key="1">
    <source>
        <dbReference type="HAMAP-Rule" id="MF_00344"/>
    </source>
</evidence>
<reference key="1">
    <citation type="journal article" date="2011" name="J. Bacteriol.">
        <title>Complete genome sequence and updated annotation of Desulfovibrio alaskensis G20.</title>
        <authorList>
            <person name="Hauser L.J."/>
            <person name="Land M.L."/>
            <person name="Brown S.D."/>
            <person name="Larimer F."/>
            <person name="Keller K.L."/>
            <person name="Rapp-Giles B.J."/>
            <person name="Price M.N."/>
            <person name="Lin M."/>
            <person name="Bruce D.C."/>
            <person name="Detter J.C."/>
            <person name="Tapia R."/>
            <person name="Han C.S."/>
            <person name="Goodwin L.A."/>
            <person name="Cheng J.F."/>
            <person name="Pitluck S."/>
            <person name="Copeland A."/>
            <person name="Lucas S."/>
            <person name="Nolan M."/>
            <person name="Lapidus A.L."/>
            <person name="Palumbo A.V."/>
            <person name="Wall J.D."/>
        </authorList>
    </citation>
    <scope>NUCLEOTIDE SEQUENCE [LARGE SCALE GENOMIC DNA]</scope>
    <source>
        <strain>ATCC BAA-1058 / DSM 17464 / G20</strain>
    </source>
</reference>
<feature type="chain" id="PRO_0000229424" description="GMP synthase [glutamine-hydrolyzing]">
    <location>
        <begin position="1"/>
        <end position="516"/>
    </location>
</feature>
<feature type="domain" description="Glutamine amidotransferase type-1" evidence="1">
    <location>
        <begin position="6"/>
        <end position="198"/>
    </location>
</feature>
<feature type="domain" description="GMPS ATP-PPase" evidence="1">
    <location>
        <begin position="199"/>
        <end position="391"/>
    </location>
</feature>
<feature type="active site" description="Nucleophile" evidence="1">
    <location>
        <position position="83"/>
    </location>
</feature>
<feature type="active site" evidence="1">
    <location>
        <position position="172"/>
    </location>
</feature>
<feature type="active site" evidence="1">
    <location>
        <position position="174"/>
    </location>
</feature>
<feature type="binding site" evidence="1">
    <location>
        <begin position="227"/>
        <end position="233"/>
    </location>
    <ligand>
        <name>ATP</name>
        <dbReference type="ChEBI" id="CHEBI:30616"/>
    </ligand>
</feature>
<keyword id="KW-0067">ATP-binding</keyword>
<keyword id="KW-0315">Glutamine amidotransferase</keyword>
<keyword id="KW-0332">GMP biosynthesis</keyword>
<keyword id="KW-0436">Ligase</keyword>
<keyword id="KW-0547">Nucleotide-binding</keyword>
<keyword id="KW-0658">Purine biosynthesis</keyword>
<keyword id="KW-1185">Reference proteome</keyword>
<gene>
    <name evidence="1" type="primary">guaA</name>
    <name type="ordered locus">Dde_1470</name>
</gene>
<proteinExistence type="inferred from homology"/>
<comment type="function">
    <text evidence="1">Catalyzes the synthesis of GMP from XMP.</text>
</comment>
<comment type="catalytic activity">
    <reaction evidence="1">
        <text>XMP + L-glutamine + ATP + H2O = GMP + L-glutamate + AMP + diphosphate + 2 H(+)</text>
        <dbReference type="Rhea" id="RHEA:11680"/>
        <dbReference type="ChEBI" id="CHEBI:15377"/>
        <dbReference type="ChEBI" id="CHEBI:15378"/>
        <dbReference type="ChEBI" id="CHEBI:29985"/>
        <dbReference type="ChEBI" id="CHEBI:30616"/>
        <dbReference type="ChEBI" id="CHEBI:33019"/>
        <dbReference type="ChEBI" id="CHEBI:57464"/>
        <dbReference type="ChEBI" id="CHEBI:58115"/>
        <dbReference type="ChEBI" id="CHEBI:58359"/>
        <dbReference type="ChEBI" id="CHEBI:456215"/>
        <dbReference type="EC" id="6.3.5.2"/>
    </reaction>
</comment>
<comment type="pathway">
    <text evidence="1">Purine metabolism; GMP biosynthesis; GMP from XMP (L-Gln route): step 1/1.</text>
</comment>
<comment type="subunit">
    <text evidence="1">Homodimer.</text>
</comment>
<dbReference type="EC" id="6.3.5.2" evidence="1"/>
<dbReference type="EMBL" id="CP000112">
    <property type="protein sequence ID" value="ABB38269.1"/>
    <property type="molecule type" value="Genomic_DNA"/>
</dbReference>
<dbReference type="RefSeq" id="WP_011367436.1">
    <property type="nucleotide sequence ID" value="NC_007519.1"/>
</dbReference>
<dbReference type="SMR" id="Q311X7"/>
<dbReference type="STRING" id="207559.Dde_1470"/>
<dbReference type="MEROPS" id="C26.957"/>
<dbReference type="KEGG" id="dde:Dde_1470"/>
<dbReference type="eggNOG" id="COG0519">
    <property type="taxonomic scope" value="Bacteria"/>
</dbReference>
<dbReference type="HOGENOM" id="CLU_014340_0_5_7"/>
<dbReference type="UniPathway" id="UPA00189">
    <property type="reaction ID" value="UER00296"/>
</dbReference>
<dbReference type="Proteomes" id="UP000002710">
    <property type="component" value="Chromosome"/>
</dbReference>
<dbReference type="GO" id="GO:0005829">
    <property type="term" value="C:cytosol"/>
    <property type="evidence" value="ECO:0007669"/>
    <property type="project" value="TreeGrafter"/>
</dbReference>
<dbReference type="GO" id="GO:0005524">
    <property type="term" value="F:ATP binding"/>
    <property type="evidence" value="ECO:0007669"/>
    <property type="project" value="UniProtKB-UniRule"/>
</dbReference>
<dbReference type="GO" id="GO:0003921">
    <property type="term" value="F:GMP synthase activity"/>
    <property type="evidence" value="ECO:0007669"/>
    <property type="project" value="InterPro"/>
</dbReference>
<dbReference type="CDD" id="cd01742">
    <property type="entry name" value="GATase1_GMP_Synthase"/>
    <property type="match status" value="1"/>
</dbReference>
<dbReference type="CDD" id="cd01997">
    <property type="entry name" value="GMP_synthase_C"/>
    <property type="match status" value="1"/>
</dbReference>
<dbReference type="FunFam" id="3.30.300.10:FF:000002">
    <property type="entry name" value="GMP synthase [glutamine-hydrolyzing]"/>
    <property type="match status" value="1"/>
</dbReference>
<dbReference type="FunFam" id="3.40.50.620:FF:000001">
    <property type="entry name" value="GMP synthase [glutamine-hydrolyzing]"/>
    <property type="match status" value="1"/>
</dbReference>
<dbReference type="FunFam" id="3.40.50.880:FF:000001">
    <property type="entry name" value="GMP synthase [glutamine-hydrolyzing]"/>
    <property type="match status" value="1"/>
</dbReference>
<dbReference type="Gene3D" id="3.30.300.10">
    <property type="match status" value="1"/>
</dbReference>
<dbReference type="Gene3D" id="3.40.50.880">
    <property type="match status" value="1"/>
</dbReference>
<dbReference type="Gene3D" id="3.40.50.620">
    <property type="entry name" value="HUPs"/>
    <property type="match status" value="1"/>
</dbReference>
<dbReference type="HAMAP" id="MF_00344">
    <property type="entry name" value="GMP_synthase"/>
    <property type="match status" value="1"/>
</dbReference>
<dbReference type="InterPro" id="IPR029062">
    <property type="entry name" value="Class_I_gatase-like"/>
</dbReference>
<dbReference type="InterPro" id="IPR017926">
    <property type="entry name" value="GATASE"/>
</dbReference>
<dbReference type="InterPro" id="IPR001674">
    <property type="entry name" value="GMP_synth_C"/>
</dbReference>
<dbReference type="InterPro" id="IPR004739">
    <property type="entry name" value="GMP_synth_GATase"/>
</dbReference>
<dbReference type="InterPro" id="IPR022955">
    <property type="entry name" value="GMP_synthase"/>
</dbReference>
<dbReference type="InterPro" id="IPR025777">
    <property type="entry name" value="GMPS_ATP_PPase_dom"/>
</dbReference>
<dbReference type="InterPro" id="IPR022310">
    <property type="entry name" value="NAD/GMP_synthase"/>
</dbReference>
<dbReference type="InterPro" id="IPR014729">
    <property type="entry name" value="Rossmann-like_a/b/a_fold"/>
</dbReference>
<dbReference type="NCBIfam" id="TIGR00884">
    <property type="entry name" value="guaA_Cterm"/>
    <property type="match status" value="1"/>
</dbReference>
<dbReference type="NCBIfam" id="TIGR00888">
    <property type="entry name" value="guaA_Nterm"/>
    <property type="match status" value="1"/>
</dbReference>
<dbReference type="NCBIfam" id="NF000848">
    <property type="entry name" value="PRK00074.1"/>
    <property type="match status" value="1"/>
</dbReference>
<dbReference type="PANTHER" id="PTHR11922:SF2">
    <property type="entry name" value="GMP SYNTHASE [GLUTAMINE-HYDROLYZING]"/>
    <property type="match status" value="1"/>
</dbReference>
<dbReference type="PANTHER" id="PTHR11922">
    <property type="entry name" value="GMP SYNTHASE-RELATED"/>
    <property type="match status" value="1"/>
</dbReference>
<dbReference type="Pfam" id="PF00117">
    <property type="entry name" value="GATase"/>
    <property type="match status" value="1"/>
</dbReference>
<dbReference type="Pfam" id="PF00958">
    <property type="entry name" value="GMP_synt_C"/>
    <property type="match status" value="1"/>
</dbReference>
<dbReference type="Pfam" id="PF02540">
    <property type="entry name" value="NAD_synthase"/>
    <property type="match status" value="1"/>
</dbReference>
<dbReference type="PRINTS" id="PR00097">
    <property type="entry name" value="ANTSNTHASEII"/>
</dbReference>
<dbReference type="PRINTS" id="PR00096">
    <property type="entry name" value="GATASE"/>
</dbReference>
<dbReference type="SUPFAM" id="SSF52402">
    <property type="entry name" value="Adenine nucleotide alpha hydrolases-like"/>
    <property type="match status" value="1"/>
</dbReference>
<dbReference type="SUPFAM" id="SSF52317">
    <property type="entry name" value="Class I glutamine amidotransferase-like"/>
    <property type="match status" value="1"/>
</dbReference>
<dbReference type="SUPFAM" id="SSF54810">
    <property type="entry name" value="GMP synthetase C-terminal dimerisation domain"/>
    <property type="match status" value="1"/>
</dbReference>
<dbReference type="PROSITE" id="PS51273">
    <property type="entry name" value="GATASE_TYPE_1"/>
    <property type="match status" value="1"/>
</dbReference>
<dbReference type="PROSITE" id="PS51553">
    <property type="entry name" value="GMPS_ATP_PPASE"/>
    <property type="match status" value="1"/>
</dbReference>
<protein>
    <recommendedName>
        <fullName evidence="1">GMP synthase [glutamine-hydrolyzing]</fullName>
        <ecNumber evidence="1">6.3.5.2</ecNumber>
    </recommendedName>
    <alternativeName>
        <fullName evidence="1">GMP synthetase</fullName>
    </alternativeName>
    <alternativeName>
        <fullName evidence="1">Glutamine amidotransferase</fullName>
    </alternativeName>
</protein>
<organism>
    <name type="scientific">Oleidesulfovibrio alaskensis (strain ATCC BAA-1058 / DSM 17464 / G20)</name>
    <name type="common">Desulfovibrio alaskensis</name>
    <dbReference type="NCBI Taxonomy" id="207559"/>
    <lineage>
        <taxon>Bacteria</taxon>
        <taxon>Pseudomonadati</taxon>
        <taxon>Thermodesulfobacteriota</taxon>
        <taxon>Desulfovibrionia</taxon>
        <taxon>Desulfovibrionales</taxon>
        <taxon>Desulfovibrionaceae</taxon>
        <taxon>Oleidesulfovibrio</taxon>
    </lineage>
</organism>
<name>GUAA_OLEA2</name>